<reference key="1">
    <citation type="submission" date="2004-07" db="EMBL/GenBank/DDBJ databases">
        <authorList>
            <consortium name="NIH - Zebrafish Gene Collection (ZGC) project"/>
        </authorList>
    </citation>
    <scope>NUCLEOTIDE SEQUENCE [LARGE SCALE MRNA]</scope>
</reference>
<feature type="chain" id="PRO_0000294354" description="Proline-rich protein 15-like protein A">
    <location>
        <begin position="1"/>
        <end position="110"/>
    </location>
</feature>
<feature type="region of interest" description="Disordered" evidence="1">
    <location>
        <begin position="29"/>
        <end position="51"/>
    </location>
</feature>
<feature type="region of interest" description="Disordered" evidence="1">
    <location>
        <begin position="65"/>
        <end position="110"/>
    </location>
</feature>
<feature type="compositionally biased region" description="Basic residues" evidence="1">
    <location>
        <begin position="65"/>
        <end position="85"/>
    </location>
</feature>
<feature type="compositionally biased region" description="Polar residues" evidence="1">
    <location>
        <begin position="100"/>
        <end position="110"/>
    </location>
</feature>
<accession>Q6DBU1</accession>
<keyword id="KW-1185">Reference proteome</keyword>
<gene>
    <name type="primary">prr15la</name>
    <name type="synonym">atad4a</name>
    <name type="ORF">zgc:91833</name>
</gene>
<organism>
    <name type="scientific">Danio rerio</name>
    <name type="common">Zebrafish</name>
    <name type="synonym">Brachydanio rerio</name>
    <dbReference type="NCBI Taxonomy" id="7955"/>
    <lineage>
        <taxon>Eukaryota</taxon>
        <taxon>Metazoa</taxon>
        <taxon>Chordata</taxon>
        <taxon>Craniata</taxon>
        <taxon>Vertebrata</taxon>
        <taxon>Euteleostomi</taxon>
        <taxon>Actinopterygii</taxon>
        <taxon>Neopterygii</taxon>
        <taxon>Teleostei</taxon>
        <taxon>Ostariophysi</taxon>
        <taxon>Cypriniformes</taxon>
        <taxon>Danionidae</taxon>
        <taxon>Danioninae</taxon>
        <taxon>Danio</taxon>
    </lineage>
</organism>
<dbReference type="EMBL" id="BC078363">
    <property type="protein sequence ID" value="AAH78363.1"/>
    <property type="molecule type" value="mRNA"/>
</dbReference>
<dbReference type="RefSeq" id="NP_001003478.1">
    <property type="nucleotide sequence ID" value="NM_001003478.1"/>
</dbReference>
<dbReference type="FunCoup" id="Q6DBU1">
    <property type="interactions" value="1699"/>
</dbReference>
<dbReference type="STRING" id="7955.ENSDARP00000121121"/>
<dbReference type="PaxDb" id="7955-ENSDARP00000121121"/>
<dbReference type="GeneID" id="445084"/>
<dbReference type="KEGG" id="dre:445084"/>
<dbReference type="AGR" id="ZFIN:ZDB-GENE-040801-218"/>
<dbReference type="CTD" id="445084"/>
<dbReference type="ZFIN" id="ZDB-GENE-040801-218">
    <property type="gene designation" value="prr15la"/>
</dbReference>
<dbReference type="eggNOG" id="ENOG502S3QC">
    <property type="taxonomic scope" value="Eukaryota"/>
</dbReference>
<dbReference type="InParanoid" id="Q6DBU1"/>
<dbReference type="OrthoDB" id="9937618at2759"/>
<dbReference type="PhylomeDB" id="Q6DBU1"/>
<dbReference type="PRO" id="PR:Q6DBU1"/>
<dbReference type="Proteomes" id="UP000000437">
    <property type="component" value="Alternate scaffold 3"/>
</dbReference>
<dbReference type="Proteomes" id="UP000000437">
    <property type="component" value="Chromosome 3"/>
</dbReference>
<dbReference type="InterPro" id="IPR028237">
    <property type="entry name" value="PRR15"/>
</dbReference>
<dbReference type="PANTHER" id="PTHR14581">
    <property type="match status" value="1"/>
</dbReference>
<dbReference type="PANTHER" id="PTHR14581:SF5">
    <property type="entry name" value="PROLINE-RICH PROTEIN 15-LIKE PROTEIN"/>
    <property type="match status" value="1"/>
</dbReference>
<dbReference type="Pfam" id="PF15321">
    <property type="entry name" value="ATAD4"/>
    <property type="match status" value="1"/>
</dbReference>
<sequence>MATAEPAPAWWKLTFLRKKKSEPKVLYEIAGDHSSNGGEAPGTTDAATDSQFNARLERIVDKTATKGRHVKVSHSGRFKEKKRIRSTLAENPELFPEAETTANENNKSGK</sequence>
<comment type="similarity">
    <text evidence="2">Belongs to the PRR15 family.</text>
</comment>
<name>P15LA_DANRE</name>
<protein>
    <recommendedName>
        <fullName>Proline-rich protein 15-like protein A</fullName>
    </recommendedName>
    <alternativeName>
        <fullName>Protein ATAD4-A</fullName>
    </alternativeName>
</protein>
<proteinExistence type="inferred from homology"/>
<evidence type="ECO:0000256" key="1">
    <source>
        <dbReference type="SAM" id="MobiDB-lite"/>
    </source>
</evidence>
<evidence type="ECO:0000305" key="2"/>